<dbReference type="EC" id="7.1.2.2" evidence="1"/>
<dbReference type="EMBL" id="CP000030">
    <property type="protein sequence ID" value="AAV86648.1"/>
    <property type="molecule type" value="Genomic_DNA"/>
</dbReference>
<dbReference type="RefSeq" id="WP_011114384.1">
    <property type="nucleotide sequence ID" value="NC_004842.2"/>
</dbReference>
<dbReference type="SMR" id="Q5PAN2"/>
<dbReference type="KEGG" id="ama:AM666"/>
<dbReference type="HOGENOM" id="CLU_022398_0_2_5"/>
<dbReference type="GO" id="GO:0005886">
    <property type="term" value="C:plasma membrane"/>
    <property type="evidence" value="ECO:0007669"/>
    <property type="project" value="UniProtKB-SubCell"/>
</dbReference>
<dbReference type="GO" id="GO:0045259">
    <property type="term" value="C:proton-transporting ATP synthase complex"/>
    <property type="evidence" value="ECO:0007669"/>
    <property type="project" value="UniProtKB-KW"/>
</dbReference>
<dbReference type="GO" id="GO:0005524">
    <property type="term" value="F:ATP binding"/>
    <property type="evidence" value="ECO:0007669"/>
    <property type="project" value="UniProtKB-UniRule"/>
</dbReference>
<dbReference type="GO" id="GO:0016887">
    <property type="term" value="F:ATP hydrolysis activity"/>
    <property type="evidence" value="ECO:0007669"/>
    <property type="project" value="InterPro"/>
</dbReference>
<dbReference type="GO" id="GO:0046933">
    <property type="term" value="F:proton-transporting ATP synthase activity, rotational mechanism"/>
    <property type="evidence" value="ECO:0007669"/>
    <property type="project" value="UniProtKB-UniRule"/>
</dbReference>
<dbReference type="CDD" id="cd18110">
    <property type="entry name" value="ATP-synt_F1_beta_C"/>
    <property type="match status" value="1"/>
</dbReference>
<dbReference type="CDD" id="cd18115">
    <property type="entry name" value="ATP-synt_F1_beta_N"/>
    <property type="match status" value="1"/>
</dbReference>
<dbReference type="CDD" id="cd01133">
    <property type="entry name" value="F1-ATPase_beta_CD"/>
    <property type="match status" value="1"/>
</dbReference>
<dbReference type="FunFam" id="1.10.1140.10:FF:000001">
    <property type="entry name" value="ATP synthase subunit beta"/>
    <property type="match status" value="1"/>
</dbReference>
<dbReference type="FunFam" id="3.40.50.300:FF:000026">
    <property type="entry name" value="ATP synthase subunit beta"/>
    <property type="match status" value="1"/>
</dbReference>
<dbReference type="Gene3D" id="2.40.10.170">
    <property type="match status" value="1"/>
</dbReference>
<dbReference type="Gene3D" id="1.10.1140.10">
    <property type="entry name" value="Bovine Mitochondrial F1-atpase, Atp Synthase Beta Chain, Chain D, domain 3"/>
    <property type="match status" value="1"/>
</dbReference>
<dbReference type="Gene3D" id="3.40.50.300">
    <property type="entry name" value="P-loop containing nucleotide triphosphate hydrolases"/>
    <property type="match status" value="1"/>
</dbReference>
<dbReference type="HAMAP" id="MF_01347">
    <property type="entry name" value="ATP_synth_beta_bact"/>
    <property type="match status" value="1"/>
</dbReference>
<dbReference type="InterPro" id="IPR003593">
    <property type="entry name" value="AAA+_ATPase"/>
</dbReference>
<dbReference type="InterPro" id="IPR055190">
    <property type="entry name" value="ATP-synt_VA_C"/>
</dbReference>
<dbReference type="InterPro" id="IPR005722">
    <property type="entry name" value="ATP_synth_F1_bsu"/>
</dbReference>
<dbReference type="InterPro" id="IPR020003">
    <property type="entry name" value="ATPase_a/bsu_AS"/>
</dbReference>
<dbReference type="InterPro" id="IPR050053">
    <property type="entry name" value="ATPase_alpha/beta_chains"/>
</dbReference>
<dbReference type="InterPro" id="IPR004100">
    <property type="entry name" value="ATPase_F1/V1/A1_a/bsu_N"/>
</dbReference>
<dbReference type="InterPro" id="IPR036121">
    <property type="entry name" value="ATPase_F1/V1/A1_a/bsu_N_sf"/>
</dbReference>
<dbReference type="InterPro" id="IPR000194">
    <property type="entry name" value="ATPase_F1/V1/A1_a/bsu_nucl-bd"/>
</dbReference>
<dbReference type="InterPro" id="IPR024034">
    <property type="entry name" value="ATPase_F1/V1_b/a_C"/>
</dbReference>
<dbReference type="InterPro" id="IPR027417">
    <property type="entry name" value="P-loop_NTPase"/>
</dbReference>
<dbReference type="NCBIfam" id="TIGR01039">
    <property type="entry name" value="atpD"/>
    <property type="match status" value="1"/>
</dbReference>
<dbReference type="PANTHER" id="PTHR15184">
    <property type="entry name" value="ATP SYNTHASE"/>
    <property type="match status" value="1"/>
</dbReference>
<dbReference type="PANTHER" id="PTHR15184:SF71">
    <property type="entry name" value="ATP SYNTHASE SUBUNIT BETA, MITOCHONDRIAL"/>
    <property type="match status" value="1"/>
</dbReference>
<dbReference type="Pfam" id="PF00006">
    <property type="entry name" value="ATP-synt_ab"/>
    <property type="match status" value="1"/>
</dbReference>
<dbReference type="Pfam" id="PF02874">
    <property type="entry name" value="ATP-synt_ab_N"/>
    <property type="match status" value="1"/>
</dbReference>
<dbReference type="Pfam" id="PF22919">
    <property type="entry name" value="ATP-synt_VA_C"/>
    <property type="match status" value="1"/>
</dbReference>
<dbReference type="SMART" id="SM00382">
    <property type="entry name" value="AAA"/>
    <property type="match status" value="1"/>
</dbReference>
<dbReference type="SUPFAM" id="SSF47917">
    <property type="entry name" value="C-terminal domain of alpha and beta subunits of F1 ATP synthase"/>
    <property type="match status" value="1"/>
</dbReference>
<dbReference type="SUPFAM" id="SSF50615">
    <property type="entry name" value="N-terminal domain of alpha and beta subunits of F1 ATP synthase"/>
    <property type="match status" value="1"/>
</dbReference>
<dbReference type="SUPFAM" id="SSF52540">
    <property type="entry name" value="P-loop containing nucleoside triphosphate hydrolases"/>
    <property type="match status" value="1"/>
</dbReference>
<dbReference type="PROSITE" id="PS00152">
    <property type="entry name" value="ATPASE_ALPHA_BETA"/>
    <property type="match status" value="1"/>
</dbReference>
<accession>Q5PAN2</accession>
<protein>
    <recommendedName>
        <fullName evidence="1">ATP synthase subunit beta</fullName>
        <ecNumber evidence="1">7.1.2.2</ecNumber>
    </recommendedName>
    <alternativeName>
        <fullName evidence="1">ATP synthase F1 sector subunit beta</fullName>
    </alternativeName>
    <alternativeName>
        <fullName evidence="1">F-ATPase subunit beta</fullName>
    </alternativeName>
</protein>
<gene>
    <name evidence="1" type="primary">atpD</name>
    <name type="ordered locus">AM666</name>
</gene>
<evidence type="ECO:0000255" key="1">
    <source>
        <dbReference type="HAMAP-Rule" id="MF_01347"/>
    </source>
</evidence>
<name>ATPB_ANAMM</name>
<organism>
    <name type="scientific">Anaplasma marginale (strain St. Maries)</name>
    <dbReference type="NCBI Taxonomy" id="234826"/>
    <lineage>
        <taxon>Bacteria</taxon>
        <taxon>Pseudomonadati</taxon>
        <taxon>Pseudomonadota</taxon>
        <taxon>Alphaproteobacteria</taxon>
        <taxon>Rickettsiales</taxon>
        <taxon>Anaplasmataceae</taxon>
        <taxon>Anaplasma</taxon>
    </lineage>
</organism>
<sequence length="486" mass="52010">MKGKVAQKRAAASPSGVGEVIRVMPAVVDVEFPHGGVPEVLGALESELEYAGEKLVLEVAQHLGDRMVRCVAMGSTDSLSRGDKFISTGNQMMAPVGRGTLGRVFDVLGRPIDGLGSVSSDVEFRPIHAKAPSLSEQRVAAEVLVTGIKVVDLLAPYLKGGKVGLFGGAGVGKTVLIMELISNVARAHKGFSVFAGVGERTREGNDLYREMVESGVISRDEPSKSQAVLVYGQMNEPPGARMRVALTALTMAEYFRDSEGQDVLFFVDNVFRFTQSGSEVSALLGRIPSAVGYQPTLAAEMGAMQERITSTNTGSITSVQAIYVPADDLTDPAPAASFAHLDSTTVLSRQISELGIYPAVDPLESTSQALSPEVVGSEHYEVAQEVKRILQTYKSLQDIIAILGMDELSQEDKLLVARARKIQRFLSQPFHVAEVFTGHPGSFVSLEDTVRSFKGLVEGQYDDLPEAAFYMVGGIDDAVKKAASLK</sequence>
<proteinExistence type="inferred from homology"/>
<comment type="function">
    <text evidence="1">Produces ATP from ADP in the presence of a proton gradient across the membrane. The catalytic sites are hosted primarily by the beta subunits.</text>
</comment>
<comment type="catalytic activity">
    <reaction evidence="1">
        <text>ATP + H2O + 4 H(+)(in) = ADP + phosphate + 5 H(+)(out)</text>
        <dbReference type="Rhea" id="RHEA:57720"/>
        <dbReference type="ChEBI" id="CHEBI:15377"/>
        <dbReference type="ChEBI" id="CHEBI:15378"/>
        <dbReference type="ChEBI" id="CHEBI:30616"/>
        <dbReference type="ChEBI" id="CHEBI:43474"/>
        <dbReference type="ChEBI" id="CHEBI:456216"/>
        <dbReference type="EC" id="7.1.2.2"/>
    </reaction>
</comment>
<comment type="subunit">
    <text evidence="1">F-type ATPases have 2 components, CF(1) - the catalytic core - and CF(0) - the membrane proton channel. CF(1) has five subunits: alpha(3), beta(3), gamma(1), delta(1), epsilon(1). CF(0) has three main subunits: a(1), b(2) and c(9-12). The alpha and beta chains form an alternating ring which encloses part of the gamma chain. CF(1) is attached to CF(0) by a central stalk formed by the gamma and epsilon chains, while a peripheral stalk is formed by the delta and b chains.</text>
</comment>
<comment type="subcellular location">
    <subcellularLocation>
        <location evidence="1">Cell inner membrane</location>
        <topology evidence="1">Peripheral membrane protein</topology>
    </subcellularLocation>
</comment>
<comment type="similarity">
    <text evidence="1">Belongs to the ATPase alpha/beta chains family.</text>
</comment>
<feature type="chain" id="PRO_0000254202" description="ATP synthase subunit beta">
    <location>
        <begin position="1"/>
        <end position="486"/>
    </location>
</feature>
<feature type="binding site" evidence="1">
    <location>
        <begin position="167"/>
        <end position="174"/>
    </location>
    <ligand>
        <name>ATP</name>
        <dbReference type="ChEBI" id="CHEBI:30616"/>
    </ligand>
</feature>
<reference key="1">
    <citation type="journal article" date="2005" name="Proc. Natl. Acad. Sci. U.S.A.">
        <title>Complete genome sequencing of Anaplasma marginale reveals that the surface is skewed to two superfamilies of outer membrane proteins.</title>
        <authorList>
            <person name="Brayton K.A."/>
            <person name="Kappmeyer L.S."/>
            <person name="Herndon D.R."/>
            <person name="Dark M.J."/>
            <person name="Tibbals D.L."/>
            <person name="Palmer G.H."/>
            <person name="McGuire T.C."/>
            <person name="Knowles D.P. Jr."/>
        </authorList>
    </citation>
    <scope>NUCLEOTIDE SEQUENCE [LARGE SCALE GENOMIC DNA]</scope>
    <source>
        <strain>St. Maries</strain>
    </source>
</reference>
<keyword id="KW-0066">ATP synthesis</keyword>
<keyword id="KW-0067">ATP-binding</keyword>
<keyword id="KW-0997">Cell inner membrane</keyword>
<keyword id="KW-1003">Cell membrane</keyword>
<keyword id="KW-0139">CF(1)</keyword>
<keyword id="KW-0375">Hydrogen ion transport</keyword>
<keyword id="KW-0406">Ion transport</keyword>
<keyword id="KW-0472">Membrane</keyword>
<keyword id="KW-0547">Nucleotide-binding</keyword>
<keyword id="KW-1278">Translocase</keyword>
<keyword id="KW-0813">Transport</keyword>